<evidence type="ECO:0000250" key="1"/>
<evidence type="ECO:0000255" key="2">
    <source>
        <dbReference type="PROSITE-ProRule" id="PRU00610"/>
    </source>
</evidence>
<evidence type="ECO:0000256" key="3">
    <source>
        <dbReference type="SAM" id="MobiDB-lite"/>
    </source>
</evidence>
<evidence type="ECO:0000305" key="4"/>
<sequence length="194" mass="21448">MTNEDLLSDSENDEDFAYKSDKEEDFSDSDDESRKLQRRIDAENKQAMAKEEVKVDKDAMRKIYEEMKSGSGAANEIKPVTVKKPDVTTTQTTQQETASTTPTASTTSTTTSTTSAPAPASIPSSAATNKVKKPKRPKKGSLLDAMNKPKKKLNTLEQSKADWGAFVDKEGIGHDLSQHNKDGYLEKRDFLDTH</sequence>
<gene>
    <name type="primary">SWC5</name>
    <name type="ordered locus">YALI0E00946g</name>
</gene>
<name>SWC5_YARLI</name>
<protein>
    <recommendedName>
        <fullName>SWR1-complex protein 5</fullName>
    </recommendedName>
</protein>
<accession>Q6C7G8</accession>
<comment type="function">
    <text evidence="1">Component of the SWR1 complex which mediates the ATP-dependent exchange of histone H2A for the H2A variant HZT1 leading to transcriptional regulation of selected genes by chromatin remodeling. Involved in chromosome stability (By similarity).</text>
</comment>
<comment type="subunit">
    <text evidence="1">Component of the SWR1 chromatin remodeling complex.</text>
</comment>
<comment type="subcellular location">
    <subcellularLocation>
        <location evidence="1">Nucleus</location>
    </subcellularLocation>
</comment>
<comment type="similarity">
    <text evidence="4">Belongs to the SWC5 family.</text>
</comment>
<organism>
    <name type="scientific">Yarrowia lipolytica (strain CLIB 122 / E 150)</name>
    <name type="common">Yeast</name>
    <name type="synonym">Candida lipolytica</name>
    <dbReference type="NCBI Taxonomy" id="284591"/>
    <lineage>
        <taxon>Eukaryota</taxon>
        <taxon>Fungi</taxon>
        <taxon>Dikarya</taxon>
        <taxon>Ascomycota</taxon>
        <taxon>Saccharomycotina</taxon>
        <taxon>Dipodascomycetes</taxon>
        <taxon>Dipodascales</taxon>
        <taxon>Dipodascales incertae sedis</taxon>
        <taxon>Yarrowia</taxon>
    </lineage>
</organism>
<feature type="chain" id="PRO_0000212512" description="SWR1-complex protein 5">
    <location>
        <begin position="1"/>
        <end position="194"/>
    </location>
</feature>
<feature type="domain" description="BCNT-C" evidence="2">
    <location>
        <begin position="133"/>
        <end position="194"/>
    </location>
</feature>
<feature type="region of interest" description="Disordered" evidence="3">
    <location>
        <begin position="1"/>
        <end position="156"/>
    </location>
</feature>
<feature type="region of interest" description="Disordered" evidence="3">
    <location>
        <begin position="171"/>
        <end position="194"/>
    </location>
</feature>
<feature type="compositionally biased region" description="Acidic residues" evidence="3">
    <location>
        <begin position="1"/>
        <end position="15"/>
    </location>
</feature>
<feature type="compositionally biased region" description="Basic and acidic residues" evidence="3">
    <location>
        <begin position="32"/>
        <end position="68"/>
    </location>
</feature>
<feature type="compositionally biased region" description="Low complexity" evidence="3">
    <location>
        <begin position="88"/>
        <end position="128"/>
    </location>
</feature>
<feature type="compositionally biased region" description="Basic residues" evidence="3">
    <location>
        <begin position="130"/>
        <end position="139"/>
    </location>
</feature>
<keyword id="KW-0010">Activator</keyword>
<keyword id="KW-0156">Chromatin regulator</keyword>
<keyword id="KW-0539">Nucleus</keyword>
<keyword id="KW-1185">Reference proteome</keyword>
<keyword id="KW-0804">Transcription</keyword>
<keyword id="KW-0805">Transcription regulation</keyword>
<dbReference type="EMBL" id="CR382131">
    <property type="protein sequence ID" value="CAG78973.1"/>
    <property type="molecule type" value="Genomic_DNA"/>
</dbReference>
<dbReference type="RefSeq" id="XP_503394.1">
    <property type="nucleotide sequence ID" value="XM_503394.1"/>
</dbReference>
<dbReference type="SMR" id="Q6C7G8"/>
<dbReference type="STRING" id="284591.Q6C7G8"/>
<dbReference type="EnsemblFungi" id="CAG78973">
    <property type="protein sequence ID" value="CAG78973"/>
    <property type="gene ID" value="YALI0_E00946g"/>
</dbReference>
<dbReference type="KEGG" id="yli:2912932"/>
<dbReference type="VEuPathDB" id="FungiDB:YALI0_E00946g"/>
<dbReference type="HOGENOM" id="CLU_1403442_0_0_1"/>
<dbReference type="InParanoid" id="Q6C7G8"/>
<dbReference type="OrthoDB" id="126635at4891"/>
<dbReference type="Proteomes" id="UP000001300">
    <property type="component" value="Chromosome E"/>
</dbReference>
<dbReference type="GO" id="GO:0005634">
    <property type="term" value="C:nucleus"/>
    <property type="evidence" value="ECO:0007669"/>
    <property type="project" value="UniProtKB-SubCell"/>
</dbReference>
<dbReference type="GO" id="GO:0006325">
    <property type="term" value="P:chromatin organization"/>
    <property type="evidence" value="ECO:0007669"/>
    <property type="project" value="UniProtKB-KW"/>
</dbReference>
<dbReference type="InterPro" id="IPR011421">
    <property type="entry name" value="BCNT-C"/>
</dbReference>
<dbReference type="InterPro" id="IPR027124">
    <property type="entry name" value="Swc5/CFDP1/2"/>
</dbReference>
<dbReference type="PANTHER" id="PTHR48407">
    <property type="entry name" value="CRANIOFACIAL DEVELOPMENT PROTEIN 1"/>
    <property type="match status" value="1"/>
</dbReference>
<dbReference type="PANTHER" id="PTHR48407:SF1">
    <property type="entry name" value="CRANIOFACIAL DEVELOPMENT PROTEIN 1"/>
    <property type="match status" value="1"/>
</dbReference>
<dbReference type="Pfam" id="PF07572">
    <property type="entry name" value="BCNT"/>
    <property type="match status" value="1"/>
</dbReference>
<dbReference type="PROSITE" id="PS51279">
    <property type="entry name" value="BCNT_C"/>
    <property type="match status" value="1"/>
</dbReference>
<reference key="1">
    <citation type="journal article" date="2004" name="Nature">
        <title>Genome evolution in yeasts.</title>
        <authorList>
            <person name="Dujon B."/>
            <person name="Sherman D."/>
            <person name="Fischer G."/>
            <person name="Durrens P."/>
            <person name="Casaregola S."/>
            <person name="Lafontaine I."/>
            <person name="de Montigny J."/>
            <person name="Marck C."/>
            <person name="Neuveglise C."/>
            <person name="Talla E."/>
            <person name="Goffard N."/>
            <person name="Frangeul L."/>
            <person name="Aigle M."/>
            <person name="Anthouard V."/>
            <person name="Babour A."/>
            <person name="Barbe V."/>
            <person name="Barnay S."/>
            <person name="Blanchin S."/>
            <person name="Beckerich J.-M."/>
            <person name="Beyne E."/>
            <person name="Bleykasten C."/>
            <person name="Boisrame A."/>
            <person name="Boyer J."/>
            <person name="Cattolico L."/>
            <person name="Confanioleri F."/>
            <person name="de Daruvar A."/>
            <person name="Despons L."/>
            <person name="Fabre E."/>
            <person name="Fairhead C."/>
            <person name="Ferry-Dumazet H."/>
            <person name="Groppi A."/>
            <person name="Hantraye F."/>
            <person name="Hennequin C."/>
            <person name="Jauniaux N."/>
            <person name="Joyet P."/>
            <person name="Kachouri R."/>
            <person name="Kerrest A."/>
            <person name="Koszul R."/>
            <person name="Lemaire M."/>
            <person name="Lesur I."/>
            <person name="Ma L."/>
            <person name="Muller H."/>
            <person name="Nicaud J.-M."/>
            <person name="Nikolski M."/>
            <person name="Oztas S."/>
            <person name="Ozier-Kalogeropoulos O."/>
            <person name="Pellenz S."/>
            <person name="Potier S."/>
            <person name="Richard G.-F."/>
            <person name="Straub M.-L."/>
            <person name="Suleau A."/>
            <person name="Swennen D."/>
            <person name="Tekaia F."/>
            <person name="Wesolowski-Louvel M."/>
            <person name="Westhof E."/>
            <person name="Wirth B."/>
            <person name="Zeniou-Meyer M."/>
            <person name="Zivanovic Y."/>
            <person name="Bolotin-Fukuhara M."/>
            <person name="Thierry A."/>
            <person name="Bouchier C."/>
            <person name="Caudron B."/>
            <person name="Scarpelli C."/>
            <person name="Gaillardin C."/>
            <person name="Weissenbach J."/>
            <person name="Wincker P."/>
            <person name="Souciet J.-L."/>
        </authorList>
    </citation>
    <scope>NUCLEOTIDE SEQUENCE [LARGE SCALE GENOMIC DNA]</scope>
    <source>
        <strain>CLIB 122 / E 150</strain>
    </source>
</reference>
<proteinExistence type="inferred from homology"/>